<accession>Q7UEP2</accession>
<protein>
    <recommendedName>
        <fullName evidence="1">Probable RNA 2'-phosphotransferase</fullName>
        <ecNumber evidence="1">2.7.1.-</ecNumber>
    </recommendedName>
</protein>
<sequence>MKADKQLVSTSKFLSLVLRHQPGVIGMTLDEQGWLEIDGLIANANTRGKKLTLELIHEVVATNDKKRFVLSDDGLRIRASQGHSVAGVDLNLTEANPPATLYHGTVDAFLPRIREQGLQKRSRNHVHLSADEATATNVGSRRGKPKLLLIAAQRMHQDGHIFYLSENEVWLVDSVPPTYLTFPT</sequence>
<gene>
    <name evidence="1" type="primary">kptA</name>
    <name type="ordered locus">RB11219</name>
</gene>
<feature type="chain" id="PRO_0000226045" description="Probable RNA 2'-phosphotransferase">
    <location>
        <begin position="1"/>
        <end position="184"/>
    </location>
</feature>
<reference key="1">
    <citation type="journal article" date="2003" name="Proc. Natl. Acad. Sci. U.S.A.">
        <title>Complete genome sequence of the marine planctomycete Pirellula sp. strain 1.</title>
        <authorList>
            <person name="Gloeckner F.O."/>
            <person name="Kube M."/>
            <person name="Bauer M."/>
            <person name="Teeling H."/>
            <person name="Lombardot T."/>
            <person name="Ludwig W."/>
            <person name="Gade D."/>
            <person name="Beck A."/>
            <person name="Borzym K."/>
            <person name="Heitmann K."/>
            <person name="Rabus R."/>
            <person name="Schlesner H."/>
            <person name="Amann R."/>
            <person name="Reinhardt R."/>
        </authorList>
    </citation>
    <scope>NUCLEOTIDE SEQUENCE [LARGE SCALE GENOMIC DNA]</scope>
    <source>
        <strain>DSM 10527 / NCIMB 13988 / SH1</strain>
    </source>
</reference>
<comment type="function">
    <text evidence="1">Removes the 2'-phosphate from RNA via an intermediate in which the phosphate is ADP-ribosylated by NAD followed by a presumed transesterification to release the RNA and generate ADP-ribose 1''-2''-cyclic phosphate (APPR&gt;P). May function as an ADP-ribosylase.</text>
</comment>
<comment type="similarity">
    <text evidence="1">Belongs to the KptA/TPT1 family.</text>
</comment>
<keyword id="KW-0520">NAD</keyword>
<keyword id="KW-1185">Reference proteome</keyword>
<keyword id="KW-0808">Transferase</keyword>
<organism>
    <name type="scientific">Rhodopirellula baltica (strain DSM 10527 / NCIMB 13988 / SH1)</name>
    <dbReference type="NCBI Taxonomy" id="243090"/>
    <lineage>
        <taxon>Bacteria</taxon>
        <taxon>Pseudomonadati</taxon>
        <taxon>Planctomycetota</taxon>
        <taxon>Planctomycetia</taxon>
        <taxon>Pirellulales</taxon>
        <taxon>Pirellulaceae</taxon>
        <taxon>Rhodopirellula</taxon>
    </lineage>
</organism>
<name>KPTA_RHOBA</name>
<proteinExistence type="inferred from homology"/>
<dbReference type="EC" id="2.7.1.-" evidence="1"/>
<dbReference type="EMBL" id="BX294153">
    <property type="protein sequence ID" value="CAD78993.1"/>
    <property type="molecule type" value="Genomic_DNA"/>
</dbReference>
<dbReference type="RefSeq" id="NP_869850.1">
    <property type="nucleotide sequence ID" value="NC_005027.1"/>
</dbReference>
<dbReference type="RefSeq" id="WP_007329713.1">
    <property type="nucleotide sequence ID" value="NC_005027.1"/>
</dbReference>
<dbReference type="SMR" id="Q7UEP2"/>
<dbReference type="FunCoup" id="Q7UEP2">
    <property type="interactions" value="173"/>
</dbReference>
<dbReference type="STRING" id="243090.RB11219"/>
<dbReference type="EnsemblBacteria" id="CAD78993">
    <property type="protein sequence ID" value="CAD78993"/>
    <property type="gene ID" value="RB11219"/>
</dbReference>
<dbReference type="KEGG" id="rba:RB11219"/>
<dbReference type="PATRIC" id="fig|243090.15.peg.5430"/>
<dbReference type="eggNOG" id="COG1859">
    <property type="taxonomic scope" value="Bacteria"/>
</dbReference>
<dbReference type="HOGENOM" id="CLU_052998_4_0_0"/>
<dbReference type="InParanoid" id="Q7UEP2"/>
<dbReference type="OrthoDB" id="4537997at2"/>
<dbReference type="Proteomes" id="UP000001025">
    <property type="component" value="Chromosome"/>
</dbReference>
<dbReference type="GO" id="GO:0003950">
    <property type="term" value="F:NAD+ poly-ADP-ribosyltransferase activity"/>
    <property type="evidence" value="ECO:0007669"/>
    <property type="project" value="InterPro"/>
</dbReference>
<dbReference type="GO" id="GO:0000215">
    <property type="term" value="F:tRNA 2'-phosphotransferase activity"/>
    <property type="evidence" value="ECO:0000318"/>
    <property type="project" value="GO_Central"/>
</dbReference>
<dbReference type="GO" id="GO:0008033">
    <property type="term" value="P:tRNA processing"/>
    <property type="evidence" value="ECO:0000318"/>
    <property type="project" value="GO_Central"/>
</dbReference>
<dbReference type="GO" id="GO:0006388">
    <property type="term" value="P:tRNA splicing, via endonucleolytic cleavage and ligation"/>
    <property type="evidence" value="ECO:0007669"/>
    <property type="project" value="UniProtKB-UniRule"/>
</dbReference>
<dbReference type="Gene3D" id="3.20.170.30">
    <property type="match status" value="1"/>
</dbReference>
<dbReference type="Gene3D" id="1.10.10.970">
    <property type="entry name" value="RNA 2'-phosphotransferase, Tpt1/KptA family, N-terminal domain"/>
    <property type="match status" value="1"/>
</dbReference>
<dbReference type="HAMAP" id="MF_00299">
    <property type="entry name" value="KptA"/>
    <property type="match status" value="1"/>
</dbReference>
<dbReference type="InterPro" id="IPR002745">
    <property type="entry name" value="Ptrans_KptA/Tpt1"/>
</dbReference>
<dbReference type="InterPro" id="IPR042081">
    <property type="entry name" value="RNA_2'-PTrans_C"/>
</dbReference>
<dbReference type="InterPro" id="IPR022928">
    <property type="entry name" value="RNA_2'-PTrans_KptA"/>
</dbReference>
<dbReference type="InterPro" id="IPR042080">
    <property type="entry name" value="RNA_2'-PTrans_N"/>
</dbReference>
<dbReference type="NCBIfam" id="NF002014">
    <property type="entry name" value="PRK00819.1-4"/>
    <property type="match status" value="1"/>
</dbReference>
<dbReference type="PANTHER" id="PTHR12684">
    <property type="entry name" value="PUTATIVE PHOSPHOTRANSFERASE"/>
    <property type="match status" value="1"/>
</dbReference>
<dbReference type="PANTHER" id="PTHR12684:SF2">
    <property type="entry name" value="TRNA 2'-PHOSPHOTRANSFERASE 1"/>
    <property type="match status" value="1"/>
</dbReference>
<dbReference type="Pfam" id="PF01885">
    <property type="entry name" value="PTS_2-RNA"/>
    <property type="match status" value="1"/>
</dbReference>
<dbReference type="SUPFAM" id="SSF56399">
    <property type="entry name" value="ADP-ribosylation"/>
    <property type="match status" value="1"/>
</dbReference>
<evidence type="ECO:0000255" key="1">
    <source>
        <dbReference type="HAMAP-Rule" id="MF_00299"/>
    </source>
</evidence>